<accession>P63819</accession>
<accession>Q99UX9</accession>
<organism>
    <name type="scientific">Staphylococcus aureus (strain N315)</name>
    <dbReference type="NCBI Taxonomy" id="158879"/>
    <lineage>
        <taxon>Bacteria</taxon>
        <taxon>Bacillati</taxon>
        <taxon>Bacillota</taxon>
        <taxon>Bacilli</taxon>
        <taxon>Bacillales</taxon>
        <taxon>Staphylococcaceae</taxon>
        <taxon>Staphylococcus</taxon>
    </lineage>
</organism>
<gene>
    <name evidence="1 3" type="primary">coaD</name>
    <name type="ordered locus">SA0973</name>
</gene>
<name>COAD_STAAN</name>
<dbReference type="EC" id="2.7.7.3" evidence="1"/>
<dbReference type="EMBL" id="BA000018">
    <property type="protein sequence ID" value="BAB42221.1"/>
    <property type="molecule type" value="Genomic_DNA"/>
</dbReference>
<dbReference type="PIR" id="A89883">
    <property type="entry name" value="A89883"/>
</dbReference>
<dbReference type="RefSeq" id="WP_000401377.1">
    <property type="nucleotide sequence ID" value="NC_002745.2"/>
</dbReference>
<dbReference type="PDB" id="3F3M">
    <property type="method" value="X-ray"/>
    <property type="resolution" value="2.40 A"/>
    <property type="chains" value="A=1-160"/>
</dbReference>
<dbReference type="PDBsum" id="3F3M"/>
<dbReference type="SMR" id="P63819"/>
<dbReference type="EnsemblBacteria" id="BAB42221">
    <property type="protein sequence ID" value="BAB42221"/>
    <property type="gene ID" value="BAB42221"/>
</dbReference>
<dbReference type="GeneID" id="98345441"/>
<dbReference type="KEGG" id="sau:SA0973"/>
<dbReference type="HOGENOM" id="CLU_100149_0_1_9"/>
<dbReference type="BRENDA" id="2.7.7.3">
    <property type="organism ID" value="3352"/>
</dbReference>
<dbReference type="UniPathway" id="UPA00241">
    <property type="reaction ID" value="UER00355"/>
</dbReference>
<dbReference type="GO" id="GO:0005737">
    <property type="term" value="C:cytoplasm"/>
    <property type="evidence" value="ECO:0007669"/>
    <property type="project" value="UniProtKB-SubCell"/>
</dbReference>
<dbReference type="GO" id="GO:0005524">
    <property type="term" value="F:ATP binding"/>
    <property type="evidence" value="ECO:0007669"/>
    <property type="project" value="UniProtKB-KW"/>
</dbReference>
<dbReference type="GO" id="GO:0004595">
    <property type="term" value="F:pantetheine-phosphate adenylyltransferase activity"/>
    <property type="evidence" value="ECO:0007669"/>
    <property type="project" value="UniProtKB-UniRule"/>
</dbReference>
<dbReference type="GO" id="GO:0015937">
    <property type="term" value="P:coenzyme A biosynthetic process"/>
    <property type="evidence" value="ECO:0007669"/>
    <property type="project" value="UniProtKB-UniRule"/>
</dbReference>
<dbReference type="CDD" id="cd02163">
    <property type="entry name" value="PPAT"/>
    <property type="match status" value="1"/>
</dbReference>
<dbReference type="Gene3D" id="3.40.50.620">
    <property type="entry name" value="HUPs"/>
    <property type="match status" value="1"/>
</dbReference>
<dbReference type="HAMAP" id="MF_00151">
    <property type="entry name" value="PPAT_bact"/>
    <property type="match status" value="1"/>
</dbReference>
<dbReference type="InterPro" id="IPR004821">
    <property type="entry name" value="Cyt_trans-like"/>
</dbReference>
<dbReference type="InterPro" id="IPR001980">
    <property type="entry name" value="PPAT"/>
</dbReference>
<dbReference type="InterPro" id="IPR014729">
    <property type="entry name" value="Rossmann-like_a/b/a_fold"/>
</dbReference>
<dbReference type="NCBIfam" id="TIGR01510">
    <property type="entry name" value="coaD_prev_kdtB"/>
    <property type="match status" value="1"/>
</dbReference>
<dbReference type="NCBIfam" id="TIGR00125">
    <property type="entry name" value="cyt_tran_rel"/>
    <property type="match status" value="1"/>
</dbReference>
<dbReference type="PANTHER" id="PTHR21342">
    <property type="entry name" value="PHOSPHOPANTETHEINE ADENYLYLTRANSFERASE"/>
    <property type="match status" value="1"/>
</dbReference>
<dbReference type="PANTHER" id="PTHR21342:SF1">
    <property type="entry name" value="PHOSPHOPANTETHEINE ADENYLYLTRANSFERASE"/>
    <property type="match status" value="1"/>
</dbReference>
<dbReference type="Pfam" id="PF01467">
    <property type="entry name" value="CTP_transf_like"/>
    <property type="match status" value="1"/>
</dbReference>
<dbReference type="PRINTS" id="PR01020">
    <property type="entry name" value="LPSBIOSNTHSS"/>
</dbReference>
<dbReference type="SUPFAM" id="SSF52374">
    <property type="entry name" value="Nucleotidylyl transferase"/>
    <property type="match status" value="1"/>
</dbReference>
<feature type="chain" id="PRO_0000156273" description="Phosphopantetheine adenylyltransferase">
    <location>
        <begin position="1"/>
        <end position="160"/>
    </location>
</feature>
<feature type="binding site" evidence="1">
    <location>
        <begin position="11"/>
        <end position="12"/>
    </location>
    <ligand>
        <name>ATP</name>
        <dbReference type="ChEBI" id="CHEBI:30616"/>
    </ligand>
</feature>
<feature type="binding site" evidence="1">
    <location>
        <position position="11"/>
    </location>
    <ligand>
        <name>substrate</name>
    </ligand>
</feature>
<feature type="binding site" evidence="1">
    <location>
        <position position="19"/>
    </location>
    <ligand>
        <name>ATP</name>
        <dbReference type="ChEBI" id="CHEBI:30616"/>
    </ligand>
</feature>
<feature type="binding site" evidence="1">
    <location>
        <position position="43"/>
    </location>
    <ligand>
        <name>substrate</name>
    </ligand>
</feature>
<feature type="binding site" evidence="1">
    <location>
        <position position="75"/>
    </location>
    <ligand>
        <name>substrate</name>
    </ligand>
</feature>
<feature type="binding site" evidence="1">
    <location>
        <position position="89"/>
    </location>
    <ligand>
        <name>substrate</name>
    </ligand>
</feature>
<feature type="binding site" evidence="1">
    <location>
        <begin position="90"/>
        <end position="92"/>
    </location>
    <ligand>
        <name>ATP</name>
        <dbReference type="ChEBI" id="CHEBI:30616"/>
    </ligand>
</feature>
<feature type="binding site" evidence="1">
    <location>
        <position position="100"/>
    </location>
    <ligand>
        <name>ATP</name>
        <dbReference type="ChEBI" id="CHEBI:30616"/>
    </ligand>
</feature>
<feature type="binding site" evidence="1">
    <location>
        <begin position="125"/>
        <end position="131"/>
    </location>
    <ligand>
        <name>ATP</name>
        <dbReference type="ChEBI" id="CHEBI:30616"/>
    </ligand>
</feature>
<feature type="site" description="Transition state stabilizer" evidence="1">
    <location>
        <position position="19"/>
    </location>
</feature>
<sequence length="160" mass="18371">MEHTIAVIPGSFDPITYGHLDIIERSTDRFDEIHVCVLKNSKKEGTFSLEERMDLIEQSVKHLPNVKVHQFSGLLVDYCEQVGAKTIIRGLRAVSDFEYELRLTSMNKKLNNEIETLYMMSSTNYSFISSSIVKEVAAYRADISEFVPPYVEKALKKKFK</sequence>
<keyword id="KW-0002">3D-structure</keyword>
<keyword id="KW-0067">ATP-binding</keyword>
<keyword id="KW-0173">Coenzyme A biosynthesis</keyword>
<keyword id="KW-0963">Cytoplasm</keyword>
<keyword id="KW-0460">Magnesium</keyword>
<keyword id="KW-0547">Nucleotide-binding</keyword>
<keyword id="KW-0548">Nucleotidyltransferase</keyword>
<keyword id="KW-0808">Transferase</keyword>
<evidence type="ECO:0000255" key="1">
    <source>
        <dbReference type="HAMAP-Rule" id="MF_00151"/>
    </source>
</evidence>
<evidence type="ECO:0000269" key="2">
    <source>
    </source>
</evidence>
<evidence type="ECO:0000303" key="3">
    <source>
    </source>
</evidence>
<reference key="1">
    <citation type="journal article" date="2001" name="Lancet">
        <title>Whole genome sequencing of meticillin-resistant Staphylococcus aureus.</title>
        <authorList>
            <person name="Kuroda M."/>
            <person name="Ohta T."/>
            <person name="Uchiyama I."/>
            <person name="Baba T."/>
            <person name="Yuzawa H."/>
            <person name="Kobayashi I."/>
            <person name="Cui L."/>
            <person name="Oguchi A."/>
            <person name="Aoki K."/>
            <person name="Nagai Y."/>
            <person name="Lian J.-Q."/>
            <person name="Ito T."/>
            <person name="Kanamori M."/>
            <person name="Matsumaru H."/>
            <person name="Maruyama A."/>
            <person name="Murakami H."/>
            <person name="Hosoyama A."/>
            <person name="Mizutani-Ui Y."/>
            <person name="Takahashi N.K."/>
            <person name="Sawano T."/>
            <person name="Inoue R."/>
            <person name="Kaito C."/>
            <person name="Sekimizu K."/>
            <person name="Hirakawa H."/>
            <person name="Kuhara S."/>
            <person name="Goto S."/>
            <person name="Yabuzaki J."/>
            <person name="Kanehisa M."/>
            <person name="Yamashita A."/>
            <person name="Oshima K."/>
            <person name="Furuya K."/>
            <person name="Yoshino C."/>
            <person name="Shiba T."/>
            <person name="Hattori M."/>
            <person name="Ogasawara N."/>
            <person name="Hayashi H."/>
            <person name="Hiramatsu K."/>
        </authorList>
    </citation>
    <scope>NUCLEOTIDE SEQUENCE [LARGE SCALE GENOMIC DNA]</scope>
    <source>
        <strain>N315</strain>
    </source>
</reference>
<reference key="2">
    <citation type="journal article" date="2009" name="Acta Crystallogr. F">
        <title>The structure of Staphylococcus aureus phosphopantetheine adenylyltransferase in complex with 3'-phosphoadenosine 5'-phosphosulfate reveals a new ligand-binding mode.</title>
        <authorList>
            <person name="Lee H.H."/>
            <person name="Yoon H.J."/>
            <person name="Kang J.Y."/>
            <person name="Park J.H."/>
            <person name="Kim D.J."/>
            <person name="Choi K.H."/>
            <person name="Lee S.K."/>
            <person name="Song J."/>
            <person name="Kim H.J."/>
            <person name="Suh S.W."/>
        </authorList>
    </citation>
    <scope>X-RAY CRYSTALLOGRAPHY (2.40 ANGSTROMS) IN COMPLEX WITH 3'-PHOSPHOADENOSINE 5'-PHOSPHOSULFATE (PAPS)</scope>
    <scope>SUBUNIT</scope>
</reference>
<comment type="function">
    <text evidence="1">Reversibly transfers an adenylyl group from ATP to 4'-phosphopantetheine, yielding dephospho-CoA (dPCoA) and pyrophosphate.</text>
</comment>
<comment type="catalytic activity">
    <reaction evidence="1">
        <text>(R)-4'-phosphopantetheine + ATP + H(+) = 3'-dephospho-CoA + diphosphate</text>
        <dbReference type="Rhea" id="RHEA:19801"/>
        <dbReference type="ChEBI" id="CHEBI:15378"/>
        <dbReference type="ChEBI" id="CHEBI:30616"/>
        <dbReference type="ChEBI" id="CHEBI:33019"/>
        <dbReference type="ChEBI" id="CHEBI:57328"/>
        <dbReference type="ChEBI" id="CHEBI:61723"/>
        <dbReference type="EC" id="2.7.7.3"/>
    </reaction>
</comment>
<comment type="cofactor">
    <cofactor evidence="1">
        <name>Mg(2+)</name>
        <dbReference type="ChEBI" id="CHEBI:18420"/>
    </cofactor>
</comment>
<comment type="pathway">
    <text evidence="1">Cofactor biosynthesis; coenzyme A biosynthesis; CoA from (R)-pantothenate: step 4/5.</text>
</comment>
<comment type="subunit">
    <text evidence="1 2">Homohexamer.</text>
</comment>
<comment type="subcellular location">
    <subcellularLocation>
        <location evidence="1">Cytoplasm</location>
    </subcellularLocation>
</comment>
<comment type="similarity">
    <text evidence="1">Belongs to the bacterial CoaD family.</text>
</comment>
<protein>
    <recommendedName>
        <fullName evidence="1 3">Phosphopantetheine adenylyltransferase</fullName>
        <ecNumber evidence="1">2.7.7.3</ecNumber>
    </recommendedName>
    <alternativeName>
        <fullName evidence="1">Dephospho-CoA pyrophosphorylase</fullName>
    </alternativeName>
    <alternativeName>
        <fullName evidence="1">Pantetheine-phosphate adenylyltransferase</fullName>
        <shortName evidence="1 3">PPAT</shortName>
    </alternativeName>
</protein>
<proteinExistence type="evidence at protein level"/>